<sequence>MNYSWIHEYYLGTCIQEEKVFSIYSASTSNNSFSFPSIPTTTTHFSNSVLNQTTTTTTTTTTTTTTTNTPPPPPQSQLQAQLQSQSQQNNQHHRPLSPNGGFFSITNSSSISDQDLRSRLKLYDDQPQQQQQQQASNKSKLSQKQTSQLNISGNNSGNSTPPLPTISNSNNSINFIHSPPPTPPLLKTPILSSHNHNNNNNNNNNNNNNNNNNNNNNNNNNNNNNNNNNNNNNNNNHNINTIDIDLVSPPPPLLLPSGSLSPLSFKHGYNSGLGGNFCSNSIANGIHLGKKPSEFQSHNNNVLLKILNYKYPPIEISTIFQREYFILSYLNDLDGTLKLIKTQSEYGNIVALIFEENGYKSLTSYYNVLSLLNGVGGCASFTNYNLNYNINNSLNNLNNNNNNNNNSYNNNYNNNNNNNGQVTSPILNNTELSQSSASAFKPFQLNSSTNSTGSPLIITSQPMPFQLNSNSNTTASSSSPITHSNLNTAITSTTTSNSNSNNNSNNNNSGGGGGGGGGGGGGGGTKINNKRRASLTPTSTPLSASPLLFNTKKYADIDINTFLSIAIQLTTILESIHGKGCIHRDIRPNNIYINSECKVKLANFQFSIFKKTSSFLKKSKFQQQHQQSENNNNNTLDSDITMIDNIDLTNSYNNNNNSSTNNIFFNFNNDYDEESINELFKSYPDLSRFSTSTYYYISPEDTGRTIHPVDEKSDLYSLGVTFFELLTGRLPFQSSDLSELIHSHLAKKPPLVIDLNQNVPLILSNIVNKLLQKSPDDRYQSAYGLKKDLEMFKLQLSIINNNNNNNNNNNNNNNNNLSNQQITDFKLGAYDVLNRPYISNELYSRKKELNSILTTIKRVSKGGKEFIIVSGLSGVGKTSLINQACKKSNTKVRFICGKFDQFNKSPYSAIIEALSQLVNLILSLSPLELEFYKDRLLRTLGSNISVITEVIPKLCLIVGTHYKVLPLPSSESQNRFDLAFKDFLRVFAEEGNPLVLFLDDFQRADPSSYRLIKLLMESNNSTSNNSTFLNCNGNNNNNNNNFSINNNNNNNNGCNNNNNNNNNNINNNNNNNNNNNINNSGGSLNYLLVIGAFRENEPNFELDFGDLSNFITMKIVLKNLDLKYVNLMVSTTLHASPQETLSLSQVVLSKTHGNAFFVILFLRTLFDESLVYFSTTTDKWCWNIEKIQKREFTDNVVEFMVENLKQLDKQAQRVLHLASCIGNSFDLDMLAFVAELSPEQCLKIMAEIISRDLIVITQQPTTTTNNNTTNNTNNNNTNNNNNNTNGNNSDINQTNLIRYHFVHDRIQQAAFNLVLLKDEKKQIHLNIGRILYKKYYVQSNNNSSNNNNNNNNNNNINIFEILNQYNFGIELIKDQDERLNLSKLNFEAGCKANSSTAFNYGNQYFQIALNLLFGESEQGEDDDLVWNEHYQMLFNIYLEKSQSEFMVGNCQESDRLLEKALQRAKKDEHIGEVTARRVKQYTLQLRFDDCIEMSIEFLKRQGIFLDINLSMDTLTKDYQKFKNRLNGQPISTIMNKLVGGGGGGSGSSNNSNNGSVVSPLVDCCLRVMVIMMPSLYLNNLNVLTLLLMKFVEYTLENGISSWSSTAFAMFGMVVSIGHFCDYSVGYQFGQYAMSLKEKYSEQPGTKGMVTLLYSGYIHHLGNHLSTSIPIVKQAFLESIEYGDFGCACYASVNLILHRILLGLPLDETYQLSKQYSNYIEQYYFKPMYQIVVSLQNFILELTGTDLLPEQQQPQQQTPNNSNSSCGSNCSSGGNSNNSNLNCSSGSSFASGSNYNNININNNNNNNNNNNNNNNNNNYNAEWDIEEFENDLLSTPDVHCPIAYHFISKCQTCYLFGDFESAWQAVLRGENSIIGIFAHTHLFSVLYLFKSLIIMKNLGNQHNNNNNNNSNHIYKTYGIENENNNDSNNNNYNFKIYSLEEEIKMAKDCIEKLESYSEQSYENFSSQLMLAKAEFERINGNFEQAMEYFSEAISLAQQFKYQQYEALANELSSRMYIQIKKFAVAKAYLIESHQCYKSWGALRKANQLELEFPNLLNFNRLNVQTKRSKRFEYSNNNNNNNSNNNNNNANQSQASISLSSSTSFNSKIIGNSSNSSNNNFNNNNNNNNNNNNLMAISSSSSICSSGSGSYGSSNGISGTTQLNSNYNSNFFEPSLSIRRRSQDGTVSTKNLSRYPVDAVDLCSVIKVSHSLAEEIYFDRLLKRLMKVVIKNAGASRGFLLLIEDKITKELFINPTSKTNITLLGDLSVAASALVNNEKVIVEVFINNNINNNNININSSGYNNTNKNDNNNNNNYSPAYNNNNNNNNNNNNNNNNNNNNNNNNNNNNNNKKQINEIIKNDSFNEEDGTWNMCLSMINYVKRTLTPLLITNAIQDNTFSEDPYVKKRNPKSILVLPIVYQGNLVSILYLENNFSTGIFSNEKLEILNLISSQIAISFSNARLFIKVNQLANQAFLAKEEAEKANKAKSDFISNMSHEMRTPLNHIIGSIELLKSYNHLFNSDQKELLDISAKSSESLLFMVNNILDLSKVEQGKTKLNLTNFNLVSFLEDSICAISPNAHLKGVYIALFINPCLSKIPVIGDINILRQVIVNLLTNAIKFTESGQVYIKLNLSINNNPTTTNNKKQLNTDNDGDDDDDDDNENLDENNEDTSIDLDDNGKVIYQKNPKSNQCYIVNIEVVDSGIGIKNEDFGKLFQRFSQIECGSNRAYDGTGLGLSIVKDLVCNLMKGDIGVKSKVGVGSTFHFCVELGKSFDESMSNKYHLPLELLNNNNNNNNNNNNNNNNNNNNNNNNNNNNNNINCSNGGSVNINSSGNSVFSCSSSNSGTRVTILEENKIICDQLSMLCVSNGLNDLTVLNDIFSLELLADCLDCYKPPIQSPRFGSTSSSLVLLSPRSTLNLSPKIISPRPYPNNQNNFLSSSPQMLSPLPNSPLSSSQQHQNNNNINNNNINNNNNNNNNNNNNNNNNNNNNNNNNNNNNNNNNNNNNNNGVGLSINLSNLNNHNHNNSHNNNSQQIQYQNSKEIFIIGLPFSYNEDKILTLVENIKSLTYSASFNKRGNISISSNVNKVEFILVTHILLSANSREILNNSNIYIVNRPIKMKTLHKTFLKIFENNNNNNINNINNNNNKSNSPIPEDSKHSQYKYQKQLSESNICYTKKPISPSPSSATVILEQQQDHNLQSPTAITTNLISEEYDHFDSNSTPPPNTATTTTTTTTLANSALANSTLANSISTTSHSSTSTSSSSSSSSSSSSSLSSTTTITTTTTTTSNLDKMLIDKKITSTQELKILIVEDNEMNANIMFKMLAKLGIQCEPHLALNGLEGVKKAKNEEYDLIIMDIQMPVMCGLTATSLIRKHEGTKKRTPIVAITASAMNGEMSKALAAGCDDYLSKPLQLKDLRYVINRYGPITLEYNS</sequence>
<accession>Q54Q69</accession>
<accession>Q95PH9</accession>
<comment type="function">
    <text evidence="1">Acts as a receptor histidine kinase for a signal transduction pathway. This protein undergoes an ATP-dependent autophosphorylation at a conserved histidine residue in the kinase core, and a phosphoryl group is then transferred to a conserved aspartate residue in the receiver domain (By similarity).</text>
</comment>
<comment type="catalytic activity">
    <reaction>
        <text>ATP + protein L-histidine = ADP + protein N-phospho-L-histidine.</text>
        <dbReference type="EC" id="2.7.13.3"/>
    </reaction>
</comment>
<comment type="catalytic activity">
    <reaction>
        <text>L-seryl-[protein] + ATP = O-phospho-L-seryl-[protein] + ADP + H(+)</text>
        <dbReference type="Rhea" id="RHEA:17989"/>
        <dbReference type="Rhea" id="RHEA-COMP:9863"/>
        <dbReference type="Rhea" id="RHEA-COMP:11604"/>
        <dbReference type="ChEBI" id="CHEBI:15378"/>
        <dbReference type="ChEBI" id="CHEBI:29999"/>
        <dbReference type="ChEBI" id="CHEBI:30616"/>
        <dbReference type="ChEBI" id="CHEBI:83421"/>
        <dbReference type="ChEBI" id="CHEBI:456216"/>
        <dbReference type="EC" id="2.7.11.1"/>
    </reaction>
</comment>
<comment type="catalytic activity">
    <reaction>
        <text>L-threonyl-[protein] + ATP = O-phospho-L-threonyl-[protein] + ADP + H(+)</text>
        <dbReference type="Rhea" id="RHEA:46608"/>
        <dbReference type="Rhea" id="RHEA-COMP:11060"/>
        <dbReference type="Rhea" id="RHEA-COMP:11605"/>
        <dbReference type="ChEBI" id="CHEBI:15378"/>
        <dbReference type="ChEBI" id="CHEBI:30013"/>
        <dbReference type="ChEBI" id="CHEBI:30616"/>
        <dbReference type="ChEBI" id="CHEBI:61977"/>
        <dbReference type="ChEBI" id="CHEBI:456216"/>
        <dbReference type="EC" id="2.7.11.1"/>
    </reaction>
</comment>
<comment type="subcellular location">
    <subcellularLocation>
        <location evidence="8">Membrane</location>
        <topology evidence="8">Multi-pass membrane protein</topology>
    </subcellularLocation>
</comment>
<comment type="domain">
    <text>Atypical domain architecture: contains STYKc/AAA module and histidine kinase/receiver module.</text>
</comment>
<comment type="PTM">
    <text evidence="1">Activation probably requires transfer of a phosphate group between a histidine in the kinase core (transmitter) domain and an aspartate of the receiver domain.</text>
</comment>
<comment type="similarity">
    <text evidence="4">Belongs to the protein kinase superfamily. Ser/Thr protein kinase family.</text>
</comment>
<reference key="1">
    <citation type="book" date="2001" name="Histidine kinases in signal transduction">
        <title>The histidine kinases of Dictyostelium.</title>
        <editorList>
            <person name="Inouye M."/>
            <person name="Dutta R."/>
        </editorList>
        <authorList>
            <person name="Anjard C."/>
            <person name="Loomis W.F."/>
        </authorList>
    </citation>
    <scope>NUCLEOTIDE SEQUENCE [GENOMIC DNA]</scope>
    <source>
        <strain>AX4</strain>
    </source>
</reference>
<reference key="2">
    <citation type="journal article" date="2005" name="Nature">
        <title>The genome of the social amoeba Dictyostelium discoideum.</title>
        <authorList>
            <person name="Eichinger L."/>
            <person name="Pachebat J.A."/>
            <person name="Gloeckner G."/>
            <person name="Rajandream M.A."/>
            <person name="Sucgang R."/>
            <person name="Berriman M."/>
            <person name="Song J."/>
            <person name="Olsen R."/>
            <person name="Szafranski K."/>
            <person name="Xu Q."/>
            <person name="Tunggal B."/>
            <person name="Kummerfeld S."/>
            <person name="Madera M."/>
            <person name="Konfortov B.A."/>
            <person name="Rivero F."/>
            <person name="Bankier A.T."/>
            <person name="Lehmann R."/>
            <person name="Hamlin N."/>
            <person name="Davies R."/>
            <person name="Gaudet P."/>
            <person name="Fey P."/>
            <person name="Pilcher K."/>
            <person name="Chen G."/>
            <person name="Saunders D."/>
            <person name="Sodergren E.J."/>
            <person name="Davis P."/>
            <person name="Kerhornou A."/>
            <person name="Nie X."/>
            <person name="Hall N."/>
            <person name="Anjard C."/>
            <person name="Hemphill L."/>
            <person name="Bason N."/>
            <person name="Farbrother P."/>
            <person name="Desany B."/>
            <person name="Just E."/>
            <person name="Morio T."/>
            <person name="Rost R."/>
            <person name="Churcher C.M."/>
            <person name="Cooper J."/>
            <person name="Haydock S."/>
            <person name="van Driessche N."/>
            <person name="Cronin A."/>
            <person name="Goodhead I."/>
            <person name="Muzny D.M."/>
            <person name="Mourier T."/>
            <person name="Pain A."/>
            <person name="Lu M."/>
            <person name="Harper D."/>
            <person name="Lindsay R."/>
            <person name="Hauser H."/>
            <person name="James K.D."/>
            <person name="Quiles M."/>
            <person name="Madan Babu M."/>
            <person name="Saito T."/>
            <person name="Buchrieser C."/>
            <person name="Wardroper A."/>
            <person name="Felder M."/>
            <person name="Thangavelu M."/>
            <person name="Johnson D."/>
            <person name="Knights A."/>
            <person name="Loulseged H."/>
            <person name="Mungall K.L."/>
            <person name="Oliver K."/>
            <person name="Price C."/>
            <person name="Quail M.A."/>
            <person name="Urushihara H."/>
            <person name="Hernandez J."/>
            <person name="Rabbinowitsch E."/>
            <person name="Steffen D."/>
            <person name="Sanders M."/>
            <person name="Ma J."/>
            <person name="Kohara Y."/>
            <person name="Sharp S."/>
            <person name="Simmonds M.N."/>
            <person name="Spiegler S."/>
            <person name="Tivey A."/>
            <person name="Sugano S."/>
            <person name="White B."/>
            <person name="Walker D."/>
            <person name="Woodward J.R."/>
            <person name="Winckler T."/>
            <person name="Tanaka Y."/>
            <person name="Shaulsky G."/>
            <person name="Schleicher M."/>
            <person name="Weinstock G.M."/>
            <person name="Rosenthal A."/>
            <person name="Cox E.C."/>
            <person name="Chisholm R.L."/>
            <person name="Gibbs R.A."/>
            <person name="Loomis W.F."/>
            <person name="Platzer M."/>
            <person name="Kay R.R."/>
            <person name="Williams J.G."/>
            <person name="Dear P.H."/>
            <person name="Noegel A.A."/>
            <person name="Barrell B.G."/>
            <person name="Kuspa A."/>
        </authorList>
    </citation>
    <scope>NUCLEOTIDE SEQUENCE [LARGE SCALE GENOMIC DNA]</scope>
    <source>
        <strain>AX4</strain>
    </source>
</reference>
<feature type="chain" id="PRO_0000328337" description="Hybrid signal transduction histidine kinase G">
    <location>
        <begin position="1"/>
        <end position="3432"/>
    </location>
</feature>
<feature type="transmembrane region" description="Helical" evidence="2">
    <location>
        <begin position="1567"/>
        <end position="1587"/>
    </location>
</feature>
<feature type="transmembrane region" description="Helical" evidence="2">
    <location>
        <begin position="1599"/>
        <end position="1619"/>
    </location>
</feature>
<feature type="domain" description="Protein kinase" evidence="4">
    <location>
        <begin position="263"/>
        <end position="792"/>
    </location>
</feature>
<feature type="repeat" description="TPR">
    <location>
        <begin position="1965"/>
        <end position="1998"/>
    </location>
</feature>
<feature type="domain" description="GAF">
    <location>
        <begin position="2215"/>
        <end position="2465"/>
    </location>
</feature>
<feature type="domain" description="Histidine kinase" evidence="3">
    <location>
        <begin position="2491"/>
        <end position="2769"/>
    </location>
</feature>
<feature type="domain" description="Response regulatory" evidence="5">
    <location>
        <begin position="3305"/>
        <end position="3424"/>
    </location>
</feature>
<feature type="region of interest" description="Disordered" evidence="7">
    <location>
        <begin position="44"/>
        <end position="109"/>
    </location>
</feature>
<feature type="region of interest" description="Disordered" evidence="7">
    <location>
        <begin position="124"/>
        <end position="240"/>
    </location>
</feature>
<feature type="region of interest" description="Disordered" evidence="7">
    <location>
        <begin position="399"/>
        <end position="426"/>
    </location>
</feature>
<feature type="region of interest" description="Disordered" evidence="7">
    <location>
        <begin position="443"/>
        <end position="542"/>
    </location>
</feature>
<feature type="region of interest" description="AAA">
    <location>
        <begin position="863"/>
        <end position="1121"/>
    </location>
</feature>
<feature type="region of interest" description="Disordered" evidence="7">
    <location>
        <begin position="1040"/>
        <end position="1077"/>
    </location>
</feature>
<feature type="region of interest" description="Disordered" evidence="7">
    <location>
        <begin position="1261"/>
        <end position="1290"/>
    </location>
</feature>
<feature type="region of interest" description="Disordered" evidence="7">
    <location>
        <begin position="2071"/>
        <end position="2095"/>
    </location>
</feature>
<feature type="region of interest" description="Disordered" evidence="7">
    <location>
        <begin position="2299"/>
        <end position="2349"/>
    </location>
</feature>
<feature type="region of interest" description="Disordered" evidence="7">
    <location>
        <begin position="2637"/>
        <end position="2673"/>
    </location>
</feature>
<feature type="region of interest" description="Disordered" evidence="7">
    <location>
        <begin position="2785"/>
        <end position="2815"/>
    </location>
</feature>
<feature type="region of interest" description="Disordered" evidence="7">
    <location>
        <begin position="2917"/>
        <end position="3030"/>
    </location>
</feature>
<feature type="region of interest" description="Disordered" evidence="7">
    <location>
        <begin position="3134"/>
        <end position="3160"/>
    </location>
</feature>
<feature type="region of interest" description="Disordered" evidence="7">
    <location>
        <begin position="3247"/>
        <end position="3281"/>
    </location>
</feature>
<feature type="compositionally biased region" description="Low complexity" evidence="7">
    <location>
        <begin position="44"/>
        <end position="68"/>
    </location>
</feature>
<feature type="compositionally biased region" description="Low complexity" evidence="7">
    <location>
        <begin position="76"/>
        <end position="90"/>
    </location>
</feature>
<feature type="compositionally biased region" description="Low complexity" evidence="7">
    <location>
        <begin position="126"/>
        <end position="145"/>
    </location>
</feature>
<feature type="compositionally biased region" description="Polar residues" evidence="7">
    <location>
        <begin position="146"/>
        <end position="157"/>
    </location>
</feature>
<feature type="compositionally biased region" description="Low complexity" evidence="7">
    <location>
        <begin position="165"/>
        <end position="177"/>
    </location>
</feature>
<feature type="compositionally biased region" description="Low complexity" evidence="7">
    <location>
        <begin position="187"/>
        <end position="238"/>
    </location>
</feature>
<feature type="compositionally biased region" description="Low complexity" evidence="7">
    <location>
        <begin position="399"/>
        <end position="419"/>
    </location>
</feature>
<feature type="compositionally biased region" description="Polar residues" evidence="7">
    <location>
        <begin position="443"/>
        <end position="467"/>
    </location>
</feature>
<feature type="compositionally biased region" description="Low complexity" evidence="7">
    <location>
        <begin position="468"/>
        <end position="479"/>
    </location>
</feature>
<feature type="compositionally biased region" description="Polar residues" evidence="7">
    <location>
        <begin position="480"/>
        <end position="490"/>
    </location>
</feature>
<feature type="compositionally biased region" description="Low complexity" evidence="7">
    <location>
        <begin position="491"/>
        <end position="508"/>
    </location>
</feature>
<feature type="compositionally biased region" description="Gly residues" evidence="7">
    <location>
        <begin position="509"/>
        <end position="525"/>
    </location>
</feature>
<feature type="compositionally biased region" description="Low complexity" evidence="7">
    <location>
        <begin position="1261"/>
        <end position="1288"/>
    </location>
</feature>
<feature type="compositionally biased region" description="Low complexity" evidence="7">
    <location>
        <begin position="2073"/>
        <end position="2095"/>
    </location>
</feature>
<feature type="compositionally biased region" description="Low complexity" evidence="7">
    <location>
        <begin position="2637"/>
        <end position="2648"/>
    </location>
</feature>
<feature type="compositionally biased region" description="Acidic residues" evidence="7">
    <location>
        <begin position="2649"/>
        <end position="2673"/>
    </location>
</feature>
<feature type="compositionally biased region" description="Low complexity" evidence="7">
    <location>
        <begin position="2787"/>
        <end position="2815"/>
    </location>
</feature>
<feature type="compositionally biased region" description="Low complexity" evidence="7">
    <location>
        <begin position="2935"/>
        <end position="3029"/>
    </location>
</feature>
<feature type="compositionally biased region" description="Low complexity" evidence="7">
    <location>
        <begin position="3134"/>
        <end position="3145"/>
    </location>
</feature>
<feature type="active site" description="Proton acceptor; for protein kinase activity" evidence="4 6">
    <location>
        <position position="585"/>
    </location>
</feature>
<feature type="binding site" evidence="4">
    <location>
        <begin position="269"/>
        <end position="277"/>
    </location>
    <ligand>
        <name>ATP</name>
        <dbReference type="ChEBI" id="CHEBI:30616"/>
    </ligand>
</feature>
<feature type="binding site" evidence="4">
    <location>
        <position position="305"/>
    </location>
    <ligand>
        <name>ATP</name>
        <dbReference type="ChEBI" id="CHEBI:30616"/>
    </ligand>
</feature>
<feature type="binding site" evidence="4">
    <location>
        <begin position="871"/>
        <end position="878"/>
    </location>
    <ligand>
        <name>ATP</name>
        <dbReference type="ChEBI" id="CHEBI:30616"/>
    </ligand>
</feature>
<feature type="modified residue" description="Phosphohistidine; by autocatalysis" evidence="3">
    <location>
        <position position="2494"/>
    </location>
</feature>
<feature type="modified residue" description="4-aspartylphosphate" evidence="5">
    <location>
        <position position="3356"/>
    </location>
</feature>
<feature type="sequence conflict" description="In Ref. 1; AAK54088." evidence="8" ref="1">
    <original>Y</original>
    <variation>N</variation>
    <location>
        <position position="1335"/>
    </location>
</feature>
<name>DHKG_DICDI</name>
<keyword id="KW-0067">ATP-binding</keyword>
<keyword id="KW-0418">Kinase</keyword>
<keyword id="KW-0472">Membrane</keyword>
<keyword id="KW-0511">Multifunctional enzyme</keyword>
<keyword id="KW-0547">Nucleotide-binding</keyword>
<keyword id="KW-0597">Phosphoprotein</keyword>
<keyword id="KW-1185">Reference proteome</keyword>
<keyword id="KW-0723">Serine/threonine-protein kinase</keyword>
<keyword id="KW-0802">TPR repeat</keyword>
<keyword id="KW-0807">Transducer</keyword>
<keyword id="KW-0808">Transferase</keyword>
<keyword id="KW-0812">Transmembrane</keyword>
<keyword id="KW-1133">Transmembrane helix</keyword>
<keyword id="KW-0902">Two-component regulatory system</keyword>
<keyword id="KW-0829">Tyrosine-protein kinase</keyword>
<dbReference type="EC" id="2.7.13.3"/>
<dbReference type="EC" id="2.7.11.1"/>
<dbReference type="EMBL" id="AF362369">
    <property type="protein sequence ID" value="AAK54088.2"/>
    <property type="molecule type" value="Genomic_DNA"/>
</dbReference>
<dbReference type="EMBL" id="AAFI02000063">
    <property type="protein sequence ID" value="EAL65363.1"/>
    <property type="molecule type" value="Genomic_DNA"/>
</dbReference>
<dbReference type="RefSeq" id="XP_638728.1">
    <property type="nucleotide sequence ID" value="XM_633636.1"/>
</dbReference>
<dbReference type="SMR" id="Q54Q69"/>
<dbReference type="STRING" id="44689.Q54Q69"/>
<dbReference type="GlyGen" id="Q54Q69">
    <property type="glycosylation" value="1 site"/>
</dbReference>
<dbReference type="PaxDb" id="44689-DDB0191388"/>
<dbReference type="EnsemblProtists" id="EAL65363">
    <property type="protein sequence ID" value="EAL65363"/>
    <property type="gene ID" value="DDB_G0284045"/>
</dbReference>
<dbReference type="GeneID" id="8624398"/>
<dbReference type="KEGG" id="ddi:DDB_G0284045"/>
<dbReference type="dictyBase" id="DDB_G0284045">
    <property type="gene designation" value="dhkG"/>
</dbReference>
<dbReference type="VEuPathDB" id="AmoebaDB:DDB_G0284045"/>
<dbReference type="eggNOG" id="KOG0519">
    <property type="taxonomic scope" value="Eukaryota"/>
</dbReference>
<dbReference type="HOGENOM" id="CLU_224929_0_0_1"/>
<dbReference type="InParanoid" id="Q54Q69"/>
<dbReference type="OMA" id="CAISPNA"/>
<dbReference type="PhylomeDB" id="Q54Q69"/>
<dbReference type="PRO" id="PR:Q54Q69"/>
<dbReference type="Proteomes" id="UP000002195">
    <property type="component" value="Chromosome 4"/>
</dbReference>
<dbReference type="GO" id="GO:0016020">
    <property type="term" value="C:membrane"/>
    <property type="evidence" value="ECO:0007669"/>
    <property type="project" value="UniProtKB-SubCell"/>
</dbReference>
<dbReference type="GO" id="GO:0005524">
    <property type="term" value="F:ATP binding"/>
    <property type="evidence" value="ECO:0007669"/>
    <property type="project" value="UniProtKB-KW"/>
</dbReference>
<dbReference type="GO" id="GO:0016887">
    <property type="term" value="F:ATP hydrolysis activity"/>
    <property type="evidence" value="ECO:0007669"/>
    <property type="project" value="InterPro"/>
</dbReference>
<dbReference type="GO" id="GO:0000155">
    <property type="term" value="F:phosphorelay sensor kinase activity"/>
    <property type="evidence" value="ECO:0007669"/>
    <property type="project" value="InterPro"/>
</dbReference>
<dbReference type="GO" id="GO:0106310">
    <property type="term" value="F:protein serine kinase activity"/>
    <property type="evidence" value="ECO:0007669"/>
    <property type="project" value="RHEA"/>
</dbReference>
<dbReference type="GO" id="GO:0004674">
    <property type="term" value="F:protein serine/threonine kinase activity"/>
    <property type="evidence" value="ECO:0007669"/>
    <property type="project" value="UniProtKB-KW"/>
</dbReference>
<dbReference type="GO" id="GO:0004713">
    <property type="term" value="F:protein tyrosine kinase activity"/>
    <property type="evidence" value="ECO:0007669"/>
    <property type="project" value="UniProtKB-KW"/>
</dbReference>
<dbReference type="CDD" id="cd00082">
    <property type="entry name" value="HisKA"/>
    <property type="match status" value="1"/>
</dbReference>
<dbReference type="CDD" id="cd17546">
    <property type="entry name" value="REC_hyHK_CKI1_RcsC-like"/>
    <property type="match status" value="1"/>
</dbReference>
<dbReference type="Gene3D" id="1.10.287.130">
    <property type="match status" value="1"/>
</dbReference>
<dbReference type="Gene3D" id="3.30.450.40">
    <property type="match status" value="1"/>
</dbReference>
<dbReference type="Gene3D" id="3.40.50.2300">
    <property type="match status" value="1"/>
</dbReference>
<dbReference type="Gene3D" id="3.30.565.10">
    <property type="entry name" value="Histidine kinase-like ATPase, C-terminal domain"/>
    <property type="match status" value="1"/>
</dbReference>
<dbReference type="Gene3D" id="3.40.50.300">
    <property type="entry name" value="P-loop containing nucleotide triphosphate hydrolases"/>
    <property type="match status" value="1"/>
</dbReference>
<dbReference type="Gene3D" id="1.10.510.10">
    <property type="entry name" value="Transferase(Phosphotransferase) domain 1"/>
    <property type="match status" value="1"/>
</dbReference>
<dbReference type="InterPro" id="IPR003593">
    <property type="entry name" value="AAA+_ATPase"/>
</dbReference>
<dbReference type="InterPro" id="IPR041664">
    <property type="entry name" value="AAA_16"/>
</dbReference>
<dbReference type="InterPro" id="IPR011006">
    <property type="entry name" value="CheY-like_superfamily"/>
</dbReference>
<dbReference type="InterPro" id="IPR003018">
    <property type="entry name" value="GAF"/>
</dbReference>
<dbReference type="InterPro" id="IPR029016">
    <property type="entry name" value="GAF-like_dom_sf"/>
</dbReference>
<dbReference type="InterPro" id="IPR036890">
    <property type="entry name" value="HATPase_C_sf"/>
</dbReference>
<dbReference type="InterPro" id="IPR005467">
    <property type="entry name" value="His_kinase_dom"/>
</dbReference>
<dbReference type="InterPro" id="IPR003661">
    <property type="entry name" value="HisK_dim/P_dom"/>
</dbReference>
<dbReference type="InterPro" id="IPR036097">
    <property type="entry name" value="HisK_dim/P_sf"/>
</dbReference>
<dbReference type="InterPro" id="IPR053159">
    <property type="entry name" value="Hybrid_Histidine_Kinase"/>
</dbReference>
<dbReference type="InterPro" id="IPR011009">
    <property type="entry name" value="Kinase-like_dom_sf"/>
</dbReference>
<dbReference type="InterPro" id="IPR027417">
    <property type="entry name" value="P-loop_NTPase"/>
</dbReference>
<dbReference type="InterPro" id="IPR000719">
    <property type="entry name" value="Prot_kinase_dom"/>
</dbReference>
<dbReference type="InterPro" id="IPR004358">
    <property type="entry name" value="Sig_transdc_His_kin-like_C"/>
</dbReference>
<dbReference type="InterPro" id="IPR001789">
    <property type="entry name" value="Sig_transdc_resp-reg_receiver"/>
</dbReference>
<dbReference type="InterPro" id="IPR008266">
    <property type="entry name" value="Tyr_kinase_AS"/>
</dbReference>
<dbReference type="PANTHER" id="PTHR43642">
    <property type="entry name" value="HYBRID SIGNAL TRANSDUCTION HISTIDINE KINASE G"/>
    <property type="match status" value="1"/>
</dbReference>
<dbReference type="PANTHER" id="PTHR43642:SF1">
    <property type="entry name" value="HYBRID SIGNAL TRANSDUCTION HISTIDINE KINASE G"/>
    <property type="match status" value="1"/>
</dbReference>
<dbReference type="Pfam" id="PF13191">
    <property type="entry name" value="AAA_16"/>
    <property type="match status" value="1"/>
</dbReference>
<dbReference type="Pfam" id="PF01590">
    <property type="entry name" value="GAF"/>
    <property type="match status" value="1"/>
</dbReference>
<dbReference type="Pfam" id="PF02518">
    <property type="entry name" value="HATPase_c"/>
    <property type="match status" value="1"/>
</dbReference>
<dbReference type="Pfam" id="PF00512">
    <property type="entry name" value="HisKA"/>
    <property type="match status" value="1"/>
</dbReference>
<dbReference type="Pfam" id="PF00069">
    <property type="entry name" value="Pkinase"/>
    <property type="match status" value="1"/>
</dbReference>
<dbReference type="Pfam" id="PF00072">
    <property type="entry name" value="Response_reg"/>
    <property type="match status" value="1"/>
</dbReference>
<dbReference type="PRINTS" id="PR00344">
    <property type="entry name" value="BCTRLSENSOR"/>
</dbReference>
<dbReference type="SMART" id="SM00382">
    <property type="entry name" value="AAA"/>
    <property type="match status" value="1"/>
</dbReference>
<dbReference type="SMART" id="SM00065">
    <property type="entry name" value="GAF"/>
    <property type="match status" value="1"/>
</dbReference>
<dbReference type="SMART" id="SM00387">
    <property type="entry name" value="HATPase_c"/>
    <property type="match status" value="1"/>
</dbReference>
<dbReference type="SMART" id="SM00388">
    <property type="entry name" value="HisKA"/>
    <property type="match status" value="1"/>
</dbReference>
<dbReference type="SMART" id="SM00448">
    <property type="entry name" value="REC"/>
    <property type="match status" value="1"/>
</dbReference>
<dbReference type="SMART" id="SM00220">
    <property type="entry name" value="S_TKc"/>
    <property type="match status" value="1"/>
</dbReference>
<dbReference type="SUPFAM" id="SSF55874">
    <property type="entry name" value="ATPase domain of HSP90 chaperone/DNA topoisomerase II/histidine kinase"/>
    <property type="match status" value="1"/>
</dbReference>
<dbReference type="SUPFAM" id="SSF52172">
    <property type="entry name" value="CheY-like"/>
    <property type="match status" value="1"/>
</dbReference>
<dbReference type="SUPFAM" id="SSF55781">
    <property type="entry name" value="GAF domain-like"/>
    <property type="match status" value="1"/>
</dbReference>
<dbReference type="SUPFAM" id="SSF47384">
    <property type="entry name" value="Homodimeric domain of signal transducing histidine kinase"/>
    <property type="match status" value="1"/>
</dbReference>
<dbReference type="SUPFAM" id="SSF52540">
    <property type="entry name" value="P-loop containing nucleoside triphosphate hydrolases"/>
    <property type="match status" value="1"/>
</dbReference>
<dbReference type="SUPFAM" id="SSF56112">
    <property type="entry name" value="Protein kinase-like (PK-like)"/>
    <property type="match status" value="1"/>
</dbReference>
<dbReference type="PROSITE" id="PS50109">
    <property type="entry name" value="HIS_KIN"/>
    <property type="match status" value="1"/>
</dbReference>
<dbReference type="PROSITE" id="PS50011">
    <property type="entry name" value="PROTEIN_KINASE_DOM"/>
    <property type="match status" value="1"/>
</dbReference>
<dbReference type="PROSITE" id="PS00109">
    <property type="entry name" value="PROTEIN_KINASE_TYR"/>
    <property type="match status" value="1"/>
</dbReference>
<dbReference type="PROSITE" id="PS50110">
    <property type="entry name" value="RESPONSE_REGULATORY"/>
    <property type="match status" value="1"/>
</dbReference>
<gene>
    <name type="primary">dhkG</name>
    <name type="ORF">DDB_G0284045</name>
</gene>
<proteinExistence type="inferred from homology"/>
<evidence type="ECO:0000250" key="1"/>
<evidence type="ECO:0000255" key="2"/>
<evidence type="ECO:0000255" key="3">
    <source>
        <dbReference type="PROSITE-ProRule" id="PRU00107"/>
    </source>
</evidence>
<evidence type="ECO:0000255" key="4">
    <source>
        <dbReference type="PROSITE-ProRule" id="PRU00159"/>
    </source>
</evidence>
<evidence type="ECO:0000255" key="5">
    <source>
        <dbReference type="PROSITE-ProRule" id="PRU00169"/>
    </source>
</evidence>
<evidence type="ECO:0000255" key="6">
    <source>
        <dbReference type="PROSITE-ProRule" id="PRU10028"/>
    </source>
</evidence>
<evidence type="ECO:0000256" key="7">
    <source>
        <dbReference type="SAM" id="MobiDB-lite"/>
    </source>
</evidence>
<evidence type="ECO:0000305" key="8"/>
<protein>
    <recommendedName>
        <fullName>Hybrid signal transduction histidine kinase G</fullName>
    </recommendedName>
    <domain>
        <recommendedName>
            <fullName>Histidine kinase dhkG</fullName>
            <ecNumber>2.7.13.3</ecNumber>
        </recommendedName>
    </domain>
    <domain>
        <recommendedName>
            <fullName>Probable serine/threonine-protein kinase dhkG</fullName>
            <ecNumber>2.7.11.1</ecNumber>
        </recommendedName>
    </domain>
</protein>
<organism>
    <name type="scientific">Dictyostelium discoideum</name>
    <name type="common">Social amoeba</name>
    <dbReference type="NCBI Taxonomy" id="44689"/>
    <lineage>
        <taxon>Eukaryota</taxon>
        <taxon>Amoebozoa</taxon>
        <taxon>Evosea</taxon>
        <taxon>Eumycetozoa</taxon>
        <taxon>Dictyostelia</taxon>
        <taxon>Dictyosteliales</taxon>
        <taxon>Dictyosteliaceae</taxon>
        <taxon>Dictyostelium</taxon>
    </lineage>
</organism>